<proteinExistence type="inferred from homology"/>
<keyword id="KW-0378">Hydrolase</keyword>
<keyword id="KW-1185">Reference proteome</keyword>
<evidence type="ECO:0000250" key="1"/>
<evidence type="ECO:0000305" key="2"/>
<gene>
    <name type="primary">apaH</name>
    <name type="ordered locus">HI_0551</name>
</gene>
<protein>
    <recommendedName>
        <fullName>Bis(5'-nucleosyl)-tetraphosphatase, symmetrical</fullName>
        <ecNumber>3.6.1.41</ecNumber>
    </recommendedName>
    <alternativeName>
        <fullName>Ap4A hydrolase</fullName>
    </alternativeName>
    <alternativeName>
        <fullName>Diadenosine 5',5'''-P1,P4-tetraphosphate pyrophosphohydrolase</fullName>
    </alternativeName>
    <alternativeName>
        <fullName>Diadenosine tetraphosphatase</fullName>
    </alternativeName>
</protein>
<organism>
    <name type="scientific">Haemophilus influenzae (strain ATCC 51907 / DSM 11121 / KW20 / Rd)</name>
    <dbReference type="NCBI Taxonomy" id="71421"/>
    <lineage>
        <taxon>Bacteria</taxon>
        <taxon>Pseudomonadati</taxon>
        <taxon>Pseudomonadota</taxon>
        <taxon>Gammaproteobacteria</taxon>
        <taxon>Pasteurellales</taxon>
        <taxon>Pasteurellaceae</taxon>
        <taxon>Haemophilus</taxon>
    </lineage>
</organism>
<sequence>MATYFVGDLQGCYDELQLLLERVDFNPTQDKLYLVGDLVARGDKSLECLRFVKSLGNAAQTVLGNHDLHLIATALDIKKVKPRDRVDAIFNAPDFDELIHWLRHQPLLVHNEKLNFLMSHAGISPDWDLKTAKSCAAEVEQILQHGDFHYLIENMYSEQPDRWSPDLQGLARHRYIINAFTRMRFCYLDHRFDFACKSPLKDAPAELTPWFNLDNPLYKQIPIVFGHWASLVDEPTPKGIYALDTGCVWNNRMTMLRWEDKQFFTQSAVKNYSDF</sequence>
<name>APAH_HAEIN</name>
<feature type="chain" id="PRO_0000197993" description="Bis(5'-nucleosyl)-tetraphosphatase, symmetrical">
    <location>
        <begin position="1"/>
        <end position="275"/>
    </location>
</feature>
<dbReference type="EC" id="3.6.1.41"/>
<dbReference type="EMBL" id="L42023">
    <property type="protein sequence ID" value="AAC22209.1"/>
    <property type="molecule type" value="Genomic_DNA"/>
</dbReference>
<dbReference type="PIR" id="B64077">
    <property type="entry name" value="B64077"/>
</dbReference>
<dbReference type="RefSeq" id="NP_438709.1">
    <property type="nucleotide sequence ID" value="NC_000907.1"/>
</dbReference>
<dbReference type="SMR" id="P44751"/>
<dbReference type="STRING" id="71421.HI_0551"/>
<dbReference type="EnsemblBacteria" id="AAC22209">
    <property type="protein sequence ID" value="AAC22209"/>
    <property type="gene ID" value="HI_0551"/>
</dbReference>
<dbReference type="KEGG" id="hin:HI_0551"/>
<dbReference type="PATRIC" id="fig|71421.8.peg.571"/>
<dbReference type="eggNOG" id="COG0639">
    <property type="taxonomic scope" value="Bacteria"/>
</dbReference>
<dbReference type="HOGENOM" id="CLU_056184_2_0_6"/>
<dbReference type="OrthoDB" id="9807890at2"/>
<dbReference type="PhylomeDB" id="P44751"/>
<dbReference type="BioCyc" id="HINF71421:G1GJ1-564-MONOMER"/>
<dbReference type="Proteomes" id="UP000000579">
    <property type="component" value="Chromosome"/>
</dbReference>
<dbReference type="GO" id="GO:0005737">
    <property type="term" value="C:cytoplasm"/>
    <property type="evidence" value="ECO:0000318"/>
    <property type="project" value="GO_Central"/>
</dbReference>
<dbReference type="GO" id="GO:0008803">
    <property type="term" value="F:bis(5'-nucleosyl)-tetraphosphatase (symmetrical) activity"/>
    <property type="evidence" value="ECO:0000318"/>
    <property type="project" value="GO_Central"/>
</dbReference>
<dbReference type="GO" id="GO:0016791">
    <property type="term" value="F:phosphatase activity"/>
    <property type="evidence" value="ECO:0000318"/>
    <property type="project" value="GO_Central"/>
</dbReference>
<dbReference type="GO" id="GO:0110154">
    <property type="term" value="P:RNA decapping"/>
    <property type="evidence" value="ECO:0000318"/>
    <property type="project" value="GO_Central"/>
</dbReference>
<dbReference type="CDD" id="cd07422">
    <property type="entry name" value="MPP_ApaH"/>
    <property type="match status" value="1"/>
</dbReference>
<dbReference type="Gene3D" id="3.60.21.10">
    <property type="match status" value="1"/>
</dbReference>
<dbReference type="HAMAP" id="MF_00199">
    <property type="entry name" value="ApaH"/>
    <property type="match status" value="1"/>
</dbReference>
<dbReference type="InterPro" id="IPR004617">
    <property type="entry name" value="ApaH"/>
</dbReference>
<dbReference type="InterPro" id="IPR004843">
    <property type="entry name" value="Calcineurin-like_PHP_ApaH"/>
</dbReference>
<dbReference type="InterPro" id="IPR029052">
    <property type="entry name" value="Metallo-depent_PP-like"/>
</dbReference>
<dbReference type="NCBIfam" id="TIGR00668">
    <property type="entry name" value="apaH"/>
    <property type="match status" value="1"/>
</dbReference>
<dbReference type="NCBIfam" id="NF001204">
    <property type="entry name" value="PRK00166.1"/>
    <property type="match status" value="1"/>
</dbReference>
<dbReference type="PANTHER" id="PTHR40942">
    <property type="match status" value="1"/>
</dbReference>
<dbReference type="PANTHER" id="PTHR40942:SF4">
    <property type="entry name" value="CYTOCHROME C5"/>
    <property type="match status" value="1"/>
</dbReference>
<dbReference type="Pfam" id="PF00149">
    <property type="entry name" value="Metallophos"/>
    <property type="match status" value="1"/>
</dbReference>
<dbReference type="PIRSF" id="PIRSF000903">
    <property type="entry name" value="B5n-ttraPtase_sm"/>
    <property type="match status" value="1"/>
</dbReference>
<dbReference type="SUPFAM" id="SSF56300">
    <property type="entry name" value="Metallo-dependent phosphatases"/>
    <property type="match status" value="1"/>
</dbReference>
<reference key="1">
    <citation type="journal article" date="1995" name="Science">
        <title>Whole-genome random sequencing and assembly of Haemophilus influenzae Rd.</title>
        <authorList>
            <person name="Fleischmann R.D."/>
            <person name="Adams M.D."/>
            <person name="White O."/>
            <person name="Clayton R.A."/>
            <person name="Kirkness E.F."/>
            <person name="Kerlavage A.R."/>
            <person name="Bult C.J."/>
            <person name="Tomb J.-F."/>
            <person name="Dougherty B.A."/>
            <person name="Merrick J.M."/>
            <person name="McKenney K."/>
            <person name="Sutton G.G."/>
            <person name="FitzHugh W."/>
            <person name="Fields C.A."/>
            <person name="Gocayne J.D."/>
            <person name="Scott J.D."/>
            <person name="Shirley R."/>
            <person name="Liu L.-I."/>
            <person name="Glodek A."/>
            <person name="Kelley J.M."/>
            <person name="Weidman J.F."/>
            <person name="Phillips C.A."/>
            <person name="Spriggs T."/>
            <person name="Hedblom E."/>
            <person name="Cotton M.D."/>
            <person name="Utterback T.R."/>
            <person name="Hanna M.C."/>
            <person name="Nguyen D.T."/>
            <person name="Saudek D.M."/>
            <person name="Brandon R.C."/>
            <person name="Fine L.D."/>
            <person name="Fritchman J.L."/>
            <person name="Fuhrmann J.L."/>
            <person name="Geoghagen N.S.M."/>
            <person name="Gnehm C.L."/>
            <person name="McDonald L.A."/>
            <person name="Small K.V."/>
            <person name="Fraser C.M."/>
            <person name="Smith H.O."/>
            <person name="Venter J.C."/>
        </authorList>
    </citation>
    <scope>NUCLEOTIDE SEQUENCE [LARGE SCALE GENOMIC DNA]</scope>
    <source>
        <strain>ATCC 51907 / DSM 11121 / KW20 / Rd</strain>
    </source>
</reference>
<accession>P44751</accession>
<comment type="function">
    <text evidence="1">Hydrolyzes diadenosine 5',5'''-P1,P4-tetraphosphate to yield ADP.</text>
</comment>
<comment type="catalytic activity">
    <reaction>
        <text>P(1),P(4)-bis(5'-adenosyl) tetraphosphate + H2O = 2 ADP + 2 H(+)</text>
        <dbReference type="Rhea" id="RHEA:24252"/>
        <dbReference type="ChEBI" id="CHEBI:15377"/>
        <dbReference type="ChEBI" id="CHEBI:15378"/>
        <dbReference type="ChEBI" id="CHEBI:58141"/>
        <dbReference type="ChEBI" id="CHEBI:456216"/>
        <dbReference type="EC" id="3.6.1.41"/>
    </reaction>
</comment>
<comment type="similarity">
    <text evidence="2">Belongs to the Ap4A hydrolase family.</text>
</comment>